<accession>Q25479</accession>
<keyword id="KW-0868">Chloride</keyword>
<keyword id="KW-0325">Glycoprotein</keyword>
<keyword id="KW-0406">Ion transport</keyword>
<keyword id="KW-0472">Membrane</keyword>
<keyword id="KW-0630">Potassium</keyword>
<keyword id="KW-0633">Potassium transport</keyword>
<keyword id="KW-0915">Sodium</keyword>
<keyword id="KW-0739">Sodium transport</keyword>
<keyword id="KW-0769">Symport</keyword>
<keyword id="KW-0812">Transmembrane</keyword>
<keyword id="KW-1133">Transmembrane helix</keyword>
<keyword id="KW-0813">Transport</keyword>
<proteinExistence type="evidence at transcript level"/>
<protein>
    <recommendedName>
        <fullName>Bumetanide-sensitive sodium-(potassium)-chloride cotransporter</fullName>
    </recommendedName>
    <alternativeName>
        <fullName>Na-K-CL symporter</fullName>
    </alternativeName>
</protein>
<organism>
    <name type="scientific">Manduca sexta</name>
    <name type="common">Tobacco hawkmoth</name>
    <name type="synonym">Tobacco hornworm</name>
    <dbReference type="NCBI Taxonomy" id="7130"/>
    <lineage>
        <taxon>Eukaryota</taxon>
        <taxon>Metazoa</taxon>
        <taxon>Ecdysozoa</taxon>
        <taxon>Arthropoda</taxon>
        <taxon>Hexapoda</taxon>
        <taxon>Insecta</taxon>
        <taxon>Pterygota</taxon>
        <taxon>Neoptera</taxon>
        <taxon>Endopterygota</taxon>
        <taxon>Lepidoptera</taxon>
        <taxon>Glossata</taxon>
        <taxon>Ditrysia</taxon>
        <taxon>Bombycoidea</taxon>
        <taxon>Sphingidae</taxon>
        <taxon>Sphinginae</taxon>
        <taxon>Sphingini</taxon>
        <taxon>Manduca</taxon>
    </lineage>
</organism>
<sequence length="1060" mass="117393">MNDENRFNVSAVEGESKKNGIHMGANIITRPLRSSVENVERGVAPNSQSEGWHHESGWKRRRSLAQLTREALPRMENYRNSKRALKRPSLGELHGDHLITEEDEKDQNHRDTKSPTPAVGIKLGWIQGVFIPCLLNIWGVMLFLRLSWVVSQAGIGLSLVIIAISAIVCVITTLSMSAICTNGEVKGGGIYYIISRSLGPEFGASVGIIFAFANAVAASMNTIGFCDSLNDLLRSNGLKITEDPINDVRIVGTVALLVMCIICAIGMDWESKAQNFLIAIIVGAMVDFVVGTIMGPKDNSEIAKGFVGLSSATFVENFKSDFRFSEKLDQNFFSVFAIFFPSVTGIQAGANISGDLKDPASAIPKGTLLALLISMVSYTLMVLFAGGGALRDASGNITDLLIVNGTVTDYSSVSLCALNNTCEYGLHNSYSVMQLMSAWGPFIYGGCWAATLSTALTNLLSVPRLIQALGVDRIYPGLIFFSKPYGRHGEPYRGYVLTFFVSLLFLLIADLNTIAPLISNFYLASYALINFCTFHRALVRPLGWRPTFRYYNMWLSLAGFLMCVAIMLLVHWVMSLVTFAIFFTLYLIVHYRRPDVNWGSSTQAQMYKTALSSAHALARTGEHVKNYWPQLLVLAGRPQARPALVDLGNLISKAGSLMIVGDISQEKLSYKVRSARARSDDEWLRGRKVRAFCSRVHGFSFEPGARALVQGSGVGRLAPNVLLMGYKSDWTTCPANDLVSYFNVLHTAFENRLAVAIVRVSGGLDYSAVVSEGAEEGAAGSLTATSSSGELRVRRDGLIMHADSDLDIRDTQPKHNLSNLLTLTTSRSFTISECKEKDKKKKERKPNDMHRQIVYNTASGLELSKFQLAQMSLFQKKQESGTLDVWWLYDDGGLTILLPYIISQRSAWANCKLRIFALANRLHEMELEERNMANLLAKFRIDYSSLTMVQDITDPPQPETKALFDETIKKFTEESASPDCRISDMELQTLAVKTNRQLRLRELLLANSKDARLVVMSLPMPRKGSISAPLYMAWLEMMSRDLPPMLFVRGNHTSVLTFYS</sequence>
<name>NKCL_MANSE</name>
<evidence type="ECO:0000255" key="1"/>
<evidence type="ECO:0000305" key="2"/>
<dbReference type="EMBL" id="U17344">
    <property type="protein sequence ID" value="AAA75600.1"/>
    <property type="molecule type" value="mRNA"/>
</dbReference>
<dbReference type="PIR" id="T30823">
    <property type="entry name" value="T30823"/>
</dbReference>
<dbReference type="SMR" id="Q25479"/>
<dbReference type="TCDB" id="2.A.30.1.9">
    <property type="family name" value="the cation-chloride cotransporter (ccc) family"/>
</dbReference>
<dbReference type="OrthoDB" id="2020542at2759"/>
<dbReference type="GO" id="GO:0016020">
    <property type="term" value="C:membrane"/>
    <property type="evidence" value="ECO:0007669"/>
    <property type="project" value="UniProtKB-SubCell"/>
</dbReference>
<dbReference type="GO" id="GO:0008511">
    <property type="term" value="F:sodium:potassium:chloride symporter activity"/>
    <property type="evidence" value="ECO:0007669"/>
    <property type="project" value="TreeGrafter"/>
</dbReference>
<dbReference type="GO" id="GO:0006884">
    <property type="term" value="P:cell volume homeostasis"/>
    <property type="evidence" value="ECO:0007669"/>
    <property type="project" value="TreeGrafter"/>
</dbReference>
<dbReference type="GO" id="GO:0055064">
    <property type="term" value="P:chloride ion homeostasis"/>
    <property type="evidence" value="ECO:0007669"/>
    <property type="project" value="TreeGrafter"/>
</dbReference>
<dbReference type="GO" id="GO:0055075">
    <property type="term" value="P:potassium ion homeostasis"/>
    <property type="evidence" value="ECO:0007669"/>
    <property type="project" value="TreeGrafter"/>
</dbReference>
<dbReference type="GO" id="GO:1990573">
    <property type="term" value="P:potassium ion import across plasma membrane"/>
    <property type="evidence" value="ECO:0007669"/>
    <property type="project" value="TreeGrafter"/>
</dbReference>
<dbReference type="GO" id="GO:0055078">
    <property type="term" value="P:sodium ion homeostasis"/>
    <property type="evidence" value="ECO:0007669"/>
    <property type="project" value="TreeGrafter"/>
</dbReference>
<dbReference type="FunFam" id="1.20.1740.10:FF:000022">
    <property type="entry name" value="Bumetanide-sensitive na-k-cl cotransport protein"/>
    <property type="match status" value="1"/>
</dbReference>
<dbReference type="Gene3D" id="1.20.1740.10">
    <property type="entry name" value="Amino acid/polyamine transporter I"/>
    <property type="match status" value="1"/>
</dbReference>
<dbReference type="InterPro" id="IPR004841">
    <property type="entry name" value="AA-permease/SLC12A_dom"/>
</dbReference>
<dbReference type="InterPro" id="IPR018491">
    <property type="entry name" value="SLC12_C"/>
</dbReference>
<dbReference type="InterPro" id="IPR002443">
    <property type="entry name" value="SLC12A1/SLC12A2"/>
</dbReference>
<dbReference type="InterPro" id="IPR004842">
    <property type="entry name" value="SLC12A_fam"/>
</dbReference>
<dbReference type="NCBIfam" id="TIGR00930">
    <property type="entry name" value="2a30"/>
    <property type="match status" value="1"/>
</dbReference>
<dbReference type="PANTHER" id="PTHR11827:SF48">
    <property type="entry name" value="GH09711P"/>
    <property type="match status" value="1"/>
</dbReference>
<dbReference type="PANTHER" id="PTHR11827">
    <property type="entry name" value="SOLUTE CARRIER FAMILY 12, CATION COTRANSPORTERS"/>
    <property type="match status" value="1"/>
</dbReference>
<dbReference type="Pfam" id="PF00324">
    <property type="entry name" value="AA_permease"/>
    <property type="match status" value="1"/>
</dbReference>
<dbReference type="Pfam" id="PF03522">
    <property type="entry name" value="SLC12"/>
    <property type="match status" value="1"/>
</dbReference>
<dbReference type="PRINTS" id="PR01207">
    <property type="entry name" value="NAKCLTRNSPRT"/>
</dbReference>
<reference key="1">
    <citation type="journal article" date="1995" name="Insect Biochem. Mol. Biol.">
        <title>Molecular cloning of a putative Na(+)-K(+)-2Cl-cotransporter from the Malpighian tubules of the tobacco hornworm, Manduca sexta.</title>
        <authorList>
            <person name="Reagan J.D."/>
        </authorList>
    </citation>
    <scope>NUCLEOTIDE SEQUENCE [MRNA]</scope>
    <source>
        <tissue>Malpighian tubule</tissue>
    </source>
</reference>
<comment type="function">
    <text>Electrically silent transporter system. Mediates sodium and chloride reabsorption. Plays a vital role in the regulation of ionic balance and cell volume.</text>
</comment>
<comment type="subcellular location">
    <subcellularLocation>
        <location>Membrane</location>
        <topology>Multi-pass membrane protein</topology>
    </subcellularLocation>
</comment>
<comment type="similarity">
    <text evidence="2">Belongs to the SLC12A transporter family.</text>
</comment>
<feature type="chain" id="PRO_0000178022" description="Bumetanide-sensitive sodium-(potassium)-chloride cotransporter">
    <location>
        <begin position="1"/>
        <end position="1060"/>
    </location>
</feature>
<feature type="topological domain" description="Cytoplasmic" evidence="1">
    <location>
        <begin position="1"/>
        <end position="122"/>
    </location>
</feature>
<feature type="transmembrane region" description="Helical" evidence="1">
    <location>
        <begin position="123"/>
        <end position="143"/>
    </location>
</feature>
<feature type="transmembrane region" description="Helical" evidence="1">
    <location>
        <begin position="154"/>
        <end position="174"/>
    </location>
</feature>
<feature type="topological domain" description="Cytoplasmic" evidence="1">
    <location>
        <begin position="175"/>
        <end position="197"/>
    </location>
</feature>
<feature type="transmembrane region" description="Helical" evidence="1">
    <location>
        <begin position="198"/>
        <end position="218"/>
    </location>
</feature>
<feature type="transmembrane region" description="Helical" evidence="1">
    <location>
        <begin position="250"/>
        <end position="270"/>
    </location>
</feature>
<feature type="topological domain" description="Cytoplasmic" evidence="1">
    <location>
        <begin position="271"/>
        <end position="275"/>
    </location>
</feature>
<feature type="transmembrane region" description="Helical" evidence="1">
    <location>
        <begin position="276"/>
        <end position="296"/>
    </location>
</feature>
<feature type="transmembrane region" description="Helical" evidence="1">
    <location>
        <begin position="332"/>
        <end position="352"/>
    </location>
</feature>
<feature type="topological domain" description="Cytoplasmic" evidence="1">
    <location>
        <begin position="353"/>
        <end position="367"/>
    </location>
</feature>
<feature type="transmembrane region" description="Helical" evidence="1">
    <location>
        <begin position="368"/>
        <end position="388"/>
    </location>
</feature>
<feature type="transmembrane region" description="Helical" evidence="1">
    <location>
        <begin position="432"/>
        <end position="452"/>
    </location>
</feature>
<feature type="topological domain" description="Cytoplasmic" evidence="1">
    <location>
        <begin position="453"/>
        <end position="497"/>
    </location>
</feature>
<feature type="transmembrane region" description="Helical" evidence="1">
    <location>
        <begin position="498"/>
        <end position="518"/>
    </location>
</feature>
<feature type="transmembrane region" description="Helical" evidence="1">
    <location>
        <begin position="563"/>
        <end position="583"/>
    </location>
</feature>
<feature type="topological domain" description="Cytoplasmic" evidence="1">
    <location>
        <begin position="584"/>
        <end position="642"/>
    </location>
</feature>
<feature type="transmembrane region" description="Helical" evidence="1">
    <location>
        <begin position="643"/>
        <end position="663"/>
    </location>
</feature>
<feature type="transmembrane region" description="Helical" evidence="1">
    <location>
        <begin position="882"/>
        <end position="902"/>
    </location>
</feature>
<feature type="topological domain" description="Cytoplasmic" evidence="1">
    <location>
        <begin position="903"/>
        <end position="1060"/>
    </location>
</feature>
<feature type="glycosylation site" description="N-linked (GlcNAc...) asparagine" evidence="1">
    <location>
        <position position="396"/>
    </location>
</feature>
<feature type="glycosylation site" description="N-linked (GlcNAc...) asparagine" evidence="1">
    <location>
        <position position="404"/>
    </location>
</feature>
<feature type="glycosylation site" description="N-linked (GlcNAc...) asparagine" evidence="1">
    <location>
        <position position="419"/>
    </location>
</feature>
<feature type="glycosylation site" description="N-linked (GlcNAc...) asparagine" evidence="1">
    <location>
        <position position="816"/>
    </location>
</feature>